<dbReference type="EC" id="2.7.2.3" evidence="1"/>
<dbReference type="EMBL" id="CP000096">
    <property type="protein sequence ID" value="ABB24965.1"/>
    <property type="molecule type" value="Genomic_DNA"/>
</dbReference>
<dbReference type="RefSeq" id="WP_011358835.1">
    <property type="nucleotide sequence ID" value="NC_007512.1"/>
</dbReference>
<dbReference type="SMR" id="Q3B116"/>
<dbReference type="STRING" id="319225.Plut_2123"/>
<dbReference type="KEGG" id="plt:Plut_2123"/>
<dbReference type="eggNOG" id="COG0126">
    <property type="taxonomic scope" value="Bacteria"/>
</dbReference>
<dbReference type="HOGENOM" id="CLU_025427_0_2_10"/>
<dbReference type="OrthoDB" id="9808460at2"/>
<dbReference type="UniPathway" id="UPA00109">
    <property type="reaction ID" value="UER00185"/>
</dbReference>
<dbReference type="Proteomes" id="UP000002709">
    <property type="component" value="Chromosome"/>
</dbReference>
<dbReference type="GO" id="GO:0005829">
    <property type="term" value="C:cytosol"/>
    <property type="evidence" value="ECO:0007669"/>
    <property type="project" value="TreeGrafter"/>
</dbReference>
<dbReference type="GO" id="GO:0043531">
    <property type="term" value="F:ADP binding"/>
    <property type="evidence" value="ECO:0007669"/>
    <property type="project" value="TreeGrafter"/>
</dbReference>
<dbReference type="GO" id="GO:0005524">
    <property type="term" value="F:ATP binding"/>
    <property type="evidence" value="ECO:0007669"/>
    <property type="project" value="UniProtKB-KW"/>
</dbReference>
<dbReference type="GO" id="GO:0004618">
    <property type="term" value="F:phosphoglycerate kinase activity"/>
    <property type="evidence" value="ECO:0007669"/>
    <property type="project" value="UniProtKB-UniRule"/>
</dbReference>
<dbReference type="GO" id="GO:0006094">
    <property type="term" value="P:gluconeogenesis"/>
    <property type="evidence" value="ECO:0007669"/>
    <property type="project" value="TreeGrafter"/>
</dbReference>
<dbReference type="GO" id="GO:0006096">
    <property type="term" value="P:glycolytic process"/>
    <property type="evidence" value="ECO:0007669"/>
    <property type="project" value="UniProtKB-UniRule"/>
</dbReference>
<dbReference type="CDD" id="cd00318">
    <property type="entry name" value="Phosphoglycerate_kinase"/>
    <property type="match status" value="1"/>
</dbReference>
<dbReference type="FunFam" id="3.40.50.1260:FF:000003">
    <property type="entry name" value="Phosphoglycerate kinase"/>
    <property type="match status" value="1"/>
</dbReference>
<dbReference type="FunFam" id="3.40.50.1260:FF:000006">
    <property type="entry name" value="Phosphoglycerate kinase"/>
    <property type="match status" value="1"/>
</dbReference>
<dbReference type="Gene3D" id="3.40.50.1260">
    <property type="entry name" value="Phosphoglycerate kinase, N-terminal domain"/>
    <property type="match status" value="2"/>
</dbReference>
<dbReference type="HAMAP" id="MF_00145">
    <property type="entry name" value="Phosphoglyc_kinase"/>
    <property type="match status" value="1"/>
</dbReference>
<dbReference type="InterPro" id="IPR001576">
    <property type="entry name" value="Phosphoglycerate_kinase"/>
</dbReference>
<dbReference type="InterPro" id="IPR015911">
    <property type="entry name" value="Phosphoglycerate_kinase_CS"/>
</dbReference>
<dbReference type="InterPro" id="IPR015824">
    <property type="entry name" value="Phosphoglycerate_kinase_N"/>
</dbReference>
<dbReference type="InterPro" id="IPR036043">
    <property type="entry name" value="Phosphoglycerate_kinase_sf"/>
</dbReference>
<dbReference type="PANTHER" id="PTHR11406">
    <property type="entry name" value="PHOSPHOGLYCERATE KINASE"/>
    <property type="match status" value="1"/>
</dbReference>
<dbReference type="PANTHER" id="PTHR11406:SF23">
    <property type="entry name" value="PHOSPHOGLYCERATE KINASE 1, CHLOROPLASTIC-RELATED"/>
    <property type="match status" value="1"/>
</dbReference>
<dbReference type="Pfam" id="PF00162">
    <property type="entry name" value="PGK"/>
    <property type="match status" value="1"/>
</dbReference>
<dbReference type="PIRSF" id="PIRSF000724">
    <property type="entry name" value="Pgk"/>
    <property type="match status" value="1"/>
</dbReference>
<dbReference type="PRINTS" id="PR00477">
    <property type="entry name" value="PHGLYCKINASE"/>
</dbReference>
<dbReference type="SUPFAM" id="SSF53748">
    <property type="entry name" value="Phosphoglycerate kinase"/>
    <property type="match status" value="1"/>
</dbReference>
<dbReference type="PROSITE" id="PS00111">
    <property type="entry name" value="PGLYCERATE_KINASE"/>
    <property type="match status" value="1"/>
</dbReference>
<feature type="chain" id="PRO_1000058024" description="Phosphoglycerate kinase">
    <location>
        <begin position="1"/>
        <end position="397"/>
    </location>
</feature>
<feature type="binding site" evidence="1">
    <location>
        <begin position="21"/>
        <end position="23"/>
    </location>
    <ligand>
        <name>substrate</name>
    </ligand>
</feature>
<feature type="binding site" evidence="1">
    <location>
        <position position="37"/>
    </location>
    <ligand>
        <name>substrate</name>
    </ligand>
</feature>
<feature type="binding site" evidence="1">
    <location>
        <begin position="60"/>
        <end position="63"/>
    </location>
    <ligand>
        <name>substrate</name>
    </ligand>
</feature>
<feature type="binding site" evidence="1">
    <location>
        <position position="119"/>
    </location>
    <ligand>
        <name>substrate</name>
    </ligand>
</feature>
<feature type="binding site" evidence="1">
    <location>
        <position position="152"/>
    </location>
    <ligand>
        <name>substrate</name>
    </ligand>
</feature>
<feature type="binding site" evidence="1">
    <location>
        <position position="203"/>
    </location>
    <ligand>
        <name>ATP</name>
        <dbReference type="ChEBI" id="CHEBI:30616"/>
    </ligand>
</feature>
<feature type="binding site" evidence="1">
    <location>
        <position position="294"/>
    </location>
    <ligand>
        <name>ATP</name>
        <dbReference type="ChEBI" id="CHEBI:30616"/>
    </ligand>
</feature>
<feature type="binding site" evidence="1">
    <location>
        <position position="325"/>
    </location>
    <ligand>
        <name>ATP</name>
        <dbReference type="ChEBI" id="CHEBI:30616"/>
    </ligand>
</feature>
<feature type="binding site" evidence="1">
    <location>
        <begin position="354"/>
        <end position="357"/>
    </location>
    <ligand>
        <name>ATP</name>
        <dbReference type="ChEBI" id="CHEBI:30616"/>
    </ligand>
</feature>
<sequence>MQKKTLSDITIQGKRVLMRVDFNVPLDGNGEITDDKRIVEALPSIRKVLDNGGRLILMSHLGRPKGKVNPDFSLTPVALRLSELIDTPVIMAGDCIGTEVMQQALALQDGEVLLLENLRFHPEEEANDPEFSRELASLGEIYVNDAFGTAHRAHASTEGITHFVQTAVAGYLIEKELMYLGKALQSPERPFVAILGGSKISGKIDVIDNLFSKVDTVLVGGAMVFTFFKAQGLETGRSLVEDNKTELALELLAKAKSMGVRLILPEDVMAAPEISPDAPFHAVSVDQLAENEMGVDIGPKTAETYRKEILGAKTVLWNGPMGVFEIDNFAGGTIAVAEALAAATAKGATTIIGGGDSAAAVAKAGLADKMTHISTGGGASLEFLEGKELPGIAALNG</sequence>
<accession>Q3B116</accession>
<evidence type="ECO:0000255" key="1">
    <source>
        <dbReference type="HAMAP-Rule" id="MF_00145"/>
    </source>
</evidence>
<keyword id="KW-0067">ATP-binding</keyword>
<keyword id="KW-0963">Cytoplasm</keyword>
<keyword id="KW-0324">Glycolysis</keyword>
<keyword id="KW-0418">Kinase</keyword>
<keyword id="KW-0547">Nucleotide-binding</keyword>
<keyword id="KW-1185">Reference proteome</keyword>
<keyword id="KW-0808">Transferase</keyword>
<name>PGK_CHLL3</name>
<organism>
    <name type="scientific">Chlorobium luteolum (strain DSM 273 / BCRC 81028 / 2530)</name>
    <name type="common">Pelodictyon luteolum</name>
    <dbReference type="NCBI Taxonomy" id="319225"/>
    <lineage>
        <taxon>Bacteria</taxon>
        <taxon>Pseudomonadati</taxon>
        <taxon>Chlorobiota</taxon>
        <taxon>Chlorobiia</taxon>
        <taxon>Chlorobiales</taxon>
        <taxon>Chlorobiaceae</taxon>
        <taxon>Chlorobium/Pelodictyon group</taxon>
        <taxon>Pelodictyon</taxon>
    </lineage>
</organism>
<gene>
    <name evidence="1" type="primary">pgk</name>
    <name type="ordered locus">Plut_2123</name>
</gene>
<protein>
    <recommendedName>
        <fullName evidence="1">Phosphoglycerate kinase</fullName>
        <ecNumber evidence="1">2.7.2.3</ecNumber>
    </recommendedName>
</protein>
<reference key="1">
    <citation type="submission" date="2005-08" db="EMBL/GenBank/DDBJ databases">
        <title>Complete sequence of Pelodictyon luteolum DSM 273.</title>
        <authorList>
            <consortium name="US DOE Joint Genome Institute"/>
            <person name="Copeland A."/>
            <person name="Lucas S."/>
            <person name="Lapidus A."/>
            <person name="Barry K."/>
            <person name="Detter J.C."/>
            <person name="Glavina T."/>
            <person name="Hammon N."/>
            <person name="Israni S."/>
            <person name="Pitluck S."/>
            <person name="Bryant D."/>
            <person name="Schmutz J."/>
            <person name="Larimer F."/>
            <person name="Land M."/>
            <person name="Kyrpides N."/>
            <person name="Ivanova N."/>
            <person name="Richardson P."/>
        </authorList>
    </citation>
    <scope>NUCLEOTIDE SEQUENCE [LARGE SCALE GENOMIC DNA]</scope>
    <source>
        <strain>DSM 273 / BCRC 81028 / 2530</strain>
    </source>
</reference>
<comment type="catalytic activity">
    <reaction evidence="1">
        <text>(2R)-3-phosphoglycerate + ATP = (2R)-3-phospho-glyceroyl phosphate + ADP</text>
        <dbReference type="Rhea" id="RHEA:14801"/>
        <dbReference type="ChEBI" id="CHEBI:30616"/>
        <dbReference type="ChEBI" id="CHEBI:57604"/>
        <dbReference type="ChEBI" id="CHEBI:58272"/>
        <dbReference type="ChEBI" id="CHEBI:456216"/>
        <dbReference type="EC" id="2.7.2.3"/>
    </reaction>
</comment>
<comment type="pathway">
    <text evidence="1">Carbohydrate degradation; glycolysis; pyruvate from D-glyceraldehyde 3-phosphate: step 2/5.</text>
</comment>
<comment type="subunit">
    <text evidence="1">Monomer.</text>
</comment>
<comment type="subcellular location">
    <subcellularLocation>
        <location evidence="1">Cytoplasm</location>
    </subcellularLocation>
</comment>
<comment type="similarity">
    <text evidence="1">Belongs to the phosphoglycerate kinase family.</text>
</comment>
<proteinExistence type="inferred from homology"/>